<proteinExistence type="evidence at transcript level"/>
<comment type="function">
    <text evidence="1">Chaperone protein which promotes assembly of the 20S proteasome as part of a heterodimer with psmg2.</text>
</comment>
<comment type="subunit">
    <text evidence="1">Forms a heterodimer with psmg2.</text>
</comment>
<comment type="subcellular location">
    <subcellularLocation>
        <location evidence="2">Cytoplasm</location>
    </subcellularLocation>
    <subcellularLocation>
        <location evidence="2">Endoplasmic reticulum</location>
    </subcellularLocation>
</comment>
<comment type="PTM">
    <text evidence="2">Degraded by the proteasome upon completion of 20S proteasome maturation.</text>
</comment>
<comment type="similarity">
    <text evidence="3">Belongs to the PSMG1 family.</text>
</comment>
<dbReference type="EMBL" id="BC123192">
    <property type="protein sequence ID" value="AAI23193.1"/>
    <property type="molecule type" value="mRNA"/>
</dbReference>
<dbReference type="SMR" id="Q05AX3"/>
<dbReference type="DNASU" id="779398"/>
<dbReference type="KEGG" id="xla:779398"/>
<dbReference type="AGR" id="Xenbase:XB-GENE-866332"/>
<dbReference type="CTD" id="779398"/>
<dbReference type="Xenbase" id="XB-GENE-866332">
    <property type="gene designation" value="psmg1.L"/>
</dbReference>
<dbReference type="OrthoDB" id="17536at2759"/>
<dbReference type="Proteomes" id="UP000186698">
    <property type="component" value="Chromosome 2L"/>
</dbReference>
<dbReference type="Bgee" id="779398">
    <property type="expression patterns" value="Expressed in oocyte and 19 other cell types or tissues"/>
</dbReference>
<dbReference type="GO" id="GO:0005737">
    <property type="term" value="C:cytoplasm"/>
    <property type="evidence" value="ECO:0000250"/>
    <property type="project" value="UniProtKB"/>
</dbReference>
<dbReference type="GO" id="GO:0005783">
    <property type="term" value="C:endoplasmic reticulum"/>
    <property type="evidence" value="ECO:0000250"/>
    <property type="project" value="UniProtKB"/>
</dbReference>
<dbReference type="GO" id="GO:0070628">
    <property type="term" value="F:proteasome binding"/>
    <property type="evidence" value="ECO:0000318"/>
    <property type="project" value="GO_Central"/>
</dbReference>
<dbReference type="GO" id="GO:0051131">
    <property type="term" value="P:chaperone-mediated protein complex assembly"/>
    <property type="evidence" value="ECO:0000250"/>
    <property type="project" value="UniProtKB"/>
</dbReference>
<dbReference type="GO" id="GO:0080129">
    <property type="term" value="P:proteasome core complex assembly"/>
    <property type="evidence" value="ECO:0000318"/>
    <property type="project" value="GO_Central"/>
</dbReference>
<dbReference type="InterPro" id="IPR016565">
    <property type="entry name" value="Proteasome_assmbl_chp_1"/>
</dbReference>
<dbReference type="PANTHER" id="PTHR15069">
    <property type="entry name" value="PROTEASOME ASSEMBLY CHAPERONE 1"/>
    <property type="match status" value="1"/>
</dbReference>
<dbReference type="PANTHER" id="PTHR15069:SF1">
    <property type="entry name" value="PROTEASOME ASSEMBLY CHAPERONE 1"/>
    <property type="match status" value="1"/>
</dbReference>
<dbReference type="Pfam" id="PF16094">
    <property type="entry name" value="PAC1"/>
    <property type="match status" value="1"/>
</dbReference>
<keyword id="KW-0143">Chaperone</keyword>
<keyword id="KW-0963">Cytoplasm</keyword>
<keyword id="KW-0256">Endoplasmic reticulum</keyword>
<keyword id="KW-1185">Reference proteome</keyword>
<feature type="chain" id="PRO_0000322549" description="Proteasome assembly chaperone 1">
    <location>
        <begin position="1"/>
        <end position="288"/>
    </location>
</feature>
<feature type="region of interest" description="Disordered" evidence="4">
    <location>
        <begin position="1"/>
        <end position="33"/>
    </location>
</feature>
<feature type="compositionally biased region" description="Acidic residues" evidence="4">
    <location>
        <begin position="17"/>
        <end position="33"/>
    </location>
</feature>
<accession>Q05AX3</accession>
<evidence type="ECO:0000250" key="1"/>
<evidence type="ECO:0000250" key="2">
    <source>
        <dbReference type="UniProtKB" id="O95456"/>
    </source>
</evidence>
<evidence type="ECO:0000255" key="3"/>
<evidence type="ECO:0000256" key="4">
    <source>
        <dbReference type="SAM" id="MobiDB-lite"/>
    </source>
</evidence>
<evidence type="ECO:0000312" key="5">
    <source>
        <dbReference type="EMBL" id="AAI23193.1"/>
    </source>
</evidence>
<organism>
    <name type="scientific">Xenopus laevis</name>
    <name type="common">African clawed frog</name>
    <dbReference type="NCBI Taxonomy" id="8355"/>
    <lineage>
        <taxon>Eukaryota</taxon>
        <taxon>Metazoa</taxon>
        <taxon>Chordata</taxon>
        <taxon>Craniata</taxon>
        <taxon>Vertebrata</taxon>
        <taxon>Euteleostomi</taxon>
        <taxon>Amphibia</taxon>
        <taxon>Batrachia</taxon>
        <taxon>Anura</taxon>
        <taxon>Pipoidea</taxon>
        <taxon>Pipidae</taxon>
        <taxon>Xenopodinae</taxon>
        <taxon>Xenopus</taxon>
        <taxon>Xenopus</taxon>
    </lineage>
</organism>
<name>PSMG1_XENLA</name>
<reference evidence="5" key="1">
    <citation type="submission" date="2006-09" db="EMBL/GenBank/DDBJ databases">
        <authorList>
            <consortium name="NIH - Xenopus Gene Collection (XGC) project"/>
        </authorList>
    </citation>
    <scope>NUCLEOTIDE SEQUENCE [LARGE SCALE MRNA]</scope>
    <source>
        <tissue evidence="5">Fat body</tissue>
    </source>
</reference>
<gene>
    <name evidence="2" type="primary">psmg1</name>
</gene>
<sequence>MATFFGEVQSVFSRAVDEEEEDEDDDEEEEEDREIIAELERKREVRVTWNPELTAAIESSPGKRLPCSSVILSVGDNATGFVSSYILSSGSWEVAGSVTLWNERCRDCNVRKDFLPAPSSCTFYRSITDPTVLLCQCNCHVAEDQLFQWCEKVFGSLEKSSLKVTVLSTCPVSEYKTPESTYSLPVPFLKALRTSEYREEVPCPLLEQPNIVDGLPAAVLSHCQVLGIPAVFYQCYTDISKLDSVTIKAFRPLLSSGSLSRLAADSANIQETLRKTVKLNEIQSNLYI</sequence>
<protein>
    <recommendedName>
        <fullName>Proteasome assembly chaperone 1</fullName>
    </recommendedName>
</protein>